<name>HBE_PITIR</name>
<dbReference type="EMBL" id="L25356">
    <property type="protein sequence ID" value="AAA36947.1"/>
    <property type="molecule type" value="Genomic_DNA"/>
</dbReference>
<dbReference type="SMR" id="P51442"/>
<dbReference type="GO" id="GO:0072562">
    <property type="term" value="C:blood microparticle"/>
    <property type="evidence" value="ECO:0007669"/>
    <property type="project" value="TreeGrafter"/>
</dbReference>
<dbReference type="GO" id="GO:0031838">
    <property type="term" value="C:haptoglobin-hemoglobin complex"/>
    <property type="evidence" value="ECO:0007669"/>
    <property type="project" value="TreeGrafter"/>
</dbReference>
<dbReference type="GO" id="GO:0005833">
    <property type="term" value="C:hemoglobin complex"/>
    <property type="evidence" value="ECO:0007669"/>
    <property type="project" value="InterPro"/>
</dbReference>
<dbReference type="GO" id="GO:0031720">
    <property type="term" value="F:haptoglobin binding"/>
    <property type="evidence" value="ECO:0007669"/>
    <property type="project" value="TreeGrafter"/>
</dbReference>
<dbReference type="GO" id="GO:0020037">
    <property type="term" value="F:heme binding"/>
    <property type="evidence" value="ECO:0007669"/>
    <property type="project" value="InterPro"/>
</dbReference>
<dbReference type="GO" id="GO:0031721">
    <property type="term" value="F:hemoglobin alpha binding"/>
    <property type="evidence" value="ECO:0007669"/>
    <property type="project" value="TreeGrafter"/>
</dbReference>
<dbReference type="GO" id="GO:0046872">
    <property type="term" value="F:metal ion binding"/>
    <property type="evidence" value="ECO:0007669"/>
    <property type="project" value="UniProtKB-KW"/>
</dbReference>
<dbReference type="GO" id="GO:0043177">
    <property type="term" value="F:organic acid binding"/>
    <property type="evidence" value="ECO:0007669"/>
    <property type="project" value="TreeGrafter"/>
</dbReference>
<dbReference type="GO" id="GO:0019825">
    <property type="term" value="F:oxygen binding"/>
    <property type="evidence" value="ECO:0007669"/>
    <property type="project" value="InterPro"/>
</dbReference>
<dbReference type="GO" id="GO:0005344">
    <property type="term" value="F:oxygen carrier activity"/>
    <property type="evidence" value="ECO:0007669"/>
    <property type="project" value="UniProtKB-KW"/>
</dbReference>
<dbReference type="GO" id="GO:0004601">
    <property type="term" value="F:peroxidase activity"/>
    <property type="evidence" value="ECO:0007669"/>
    <property type="project" value="TreeGrafter"/>
</dbReference>
<dbReference type="GO" id="GO:0042744">
    <property type="term" value="P:hydrogen peroxide catabolic process"/>
    <property type="evidence" value="ECO:0007669"/>
    <property type="project" value="TreeGrafter"/>
</dbReference>
<dbReference type="CDD" id="cd08925">
    <property type="entry name" value="Hb-beta-like"/>
    <property type="match status" value="1"/>
</dbReference>
<dbReference type="FunFam" id="1.10.490.10:FF:000001">
    <property type="entry name" value="Hemoglobin subunit beta"/>
    <property type="match status" value="1"/>
</dbReference>
<dbReference type="Gene3D" id="1.10.490.10">
    <property type="entry name" value="Globins"/>
    <property type="match status" value="1"/>
</dbReference>
<dbReference type="InterPro" id="IPR000971">
    <property type="entry name" value="Globin"/>
</dbReference>
<dbReference type="InterPro" id="IPR009050">
    <property type="entry name" value="Globin-like_sf"/>
</dbReference>
<dbReference type="InterPro" id="IPR012292">
    <property type="entry name" value="Globin/Proto"/>
</dbReference>
<dbReference type="InterPro" id="IPR002337">
    <property type="entry name" value="Hemoglobin_b"/>
</dbReference>
<dbReference type="InterPro" id="IPR050056">
    <property type="entry name" value="Hemoglobin_oxygen_transport"/>
</dbReference>
<dbReference type="PANTHER" id="PTHR11442">
    <property type="entry name" value="HEMOGLOBIN FAMILY MEMBER"/>
    <property type="match status" value="1"/>
</dbReference>
<dbReference type="PANTHER" id="PTHR11442:SF7">
    <property type="entry name" value="HEMOGLOBIN SUBUNIT EPSILON"/>
    <property type="match status" value="1"/>
</dbReference>
<dbReference type="Pfam" id="PF00042">
    <property type="entry name" value="Globin"/>
    <property type="match status" value="1"/>
</dbReference>
<dbReference type="PRINTS" id="PR00814">
    <property type="entry name" value="BETAHAEM"/>
</dbReference>
<dbReference type="SUPFAM" id="SSF46458">
    <property type="entry name" value="Globin-like"/>
    <property type="match status" value="1"/>
</dbReference>
<dbReference type="PROSITE" id="PS01033">
    <property type="entry name" value="GLOBIN"/>
    <property type="match status" value="1"/>
</dbReference>
<feature type="chain" id="PRO_0000053223" description="Hemoglobin subunit epsilon">
    <location>
        <begin position="1"/>
        <end position="147"/>
    </location>
</feature>
<feature type="domain" description="Globin" evidence="2">
    <location>
        <begin position="3"/>
        <end position="147"/>
    </location>
</feature>
<feature type="binding site" description="distal binding residue" evidence="2">
    <location>
        <position position="64"/>
    </location>
    <ligand>
        <name>heme b</name>
        <dbReference type="ChEBI" id="CHEBI:60344"/>
    </ligand>
    <ligandPart>
        <name>Fe</name>
        <dbReference type="ChEBI" id="CHEBI:18248"/>
    </ligandPart>
</feature>
<feature type="binding site" description="proximal binding residue" evidence="2">
    <location>
        <position position="93"/>
    </location>
    <ligand>
        <name>heme b</name>
        <dbReference type="ChEBI" id="CHEBI:60344"/>
    </ligand>
    <ligandPart>
        <name>Fe</name>
        <dbReference type="ChEBI" id="CHEBI:18248"/>
    </ligandPart>
</feature>
<feature type="modified residue" description="Phosphoserine" evidence="1">
    <location>
        <position position="14"/>
    </location>
</feature>
<feature type="modified residue" description="Phosphoserine" evidence="1">
    <location>
        <position position="51"/>
    </location>
</feature>
<protein>
    <recommendedName>
        <fullName>Hemoglobin subunit epsilon</fullName>
    </recommendedName>
    <alternativeName>
        <fullName>Epsilon-globin</fullName>
    </alternativeName>
    <alternativeName>
        <fullName>Hemoglobin epsilon chain</fullName>
    </alternativeName>
</protein>
<reference key="1">
    <citation type="journal article" date="1993" name="Mol. Phylogenet. Evol.">
        <title>Molecular phylogeny of the New World monkeys (Platyrrhini, primates).</title>
        <authorList>
            <person name="Schneider H."/>
            <person name="Schneider M.P.C."/>
            <person name="Sampaio I."/>
            <person name="Harada M.L."/>
            <person name="Stanhope M.J."/>
            <person name="Czekysbuaj J."/>
            <person name="Goodman M."/>
        </authorList>
    </citation>
    <scope>NUCLEOTIDE SEQUENCE [GENOMIC DNA]</scope>
    <source>
        <tissue>Lymphocyte</tissue>
    </source>
</reference>
<proteinExistence type="evidence at transcript level"/>
<sequence>MVHFTAEEKAAITSLWGKMNVEEAGGEALGRLLVVYPWTQRFFDNFGNLSSPSAILGNLKVKAHGKKVLTSFGDAIKNMDNLKTTFAKLSELHCDKLHVDPENFRLLGNVMVIILATHFGKEFTPEVQAAWQKLVSAVAIALGHKYH</sequence>
<accession>P51442</accession>
<evidence type="ECO:0000250" key="1">
    <source>
        <dbReference type="UniProtKB" id="P02100"/>
    </source>
</evidence>
<evidence type="ECO:0000255" key="2">
    <source>
        <dbReference type="PROSITE-ProRule" id="PRU00238"/>
    </source>
</evidence>
<comment type="function">
    <text>The epsilon chain is a beta-type chain of early mammalian embryonic hemoglobin.</text>
</comment>
<comment type="subunit">
    <text>Heterotetramer of two alpha chains and two epsilon chains in early embryonic hemoglobin Gower-2; two zeta chains and two epsilon chains in early embryonic hemoglobin Gower-1.</text>
</comment>
<comment type="tissue specificity">
    <text>Red blood cells.</text>
</comment>
<comment type="similarity">
    <text evidence="2">Belongs to the globin family.</text>
</comment>
<organism>
    <name type="scientific">Pithecia irrorata</name>
    <name type="common">Gray monk saki</name>
    <dbReference type="NCBI Taxonomy" id="30598"/>
    <lineage>
        <taxon>Eukaryota</taxon>
        <taxon>Metazoa</taxon>
        <taxon>Chordata</taxon>
        <taxon>Craniata</taxon>
        <taxon>Vertebrata</taxon>
        <taxon>Euteleostomi</taxon>
        <taxon>Mammalia</taxon>
        <taxon>Eutheria</taxon>
        <taxon>Euarchontoglires</taxon>
        <taxon>Primates</taxon>
        <taxon>Haplorrhini</taxon>
        <taxon>Platyrrhini</taxon>
        <taxon>Pitheciidae</taxon>
        <taxon>Pitheciinae</taxon>
        <taxon>Pithecia</taxon>
    </lineage>
</organism>
<gene>
    <name type="primary">HBE1</name>
</gene>
<keyword id="KW-0349">Heme</keyword>
<keyword id="KW-0408">Iron</keyword>
<keyword id="KW-0479">Metal-binding</keyword>
<keyword id="KW-0561">Oxygen transport</keyword>
<keyword id="KW-0597">Phosphoprotein</keyword>
<keyword id="KW-0813">Transport</keyword>